<dbReference type="EMBL" id="CP000527">
    <property type="protein sequence ID" value="ABM28441.1"/>
    <property type="molecule type" value="Genomic_DNA"/>
</dbReference>
<dbReference type="RefSeq" id="WP_011792247.1">
    <property type="nucleotide sequence ID" value="NC_008751.1"/>
</dbReference>
<dbReference type="SMR" id="A1VDC5"/>
<dbReference type="KEGG" id="dvl:Dvul_1423"/>
<dbReference type="HOGENOM" id="CLU_033732_3_0_7"/>
<dbReference type="Proteomes" id="UP000009173">
    <property type="component" value="Chromosome"/>
</dbReference>
<dbReference type="GO" id="GO:0005525">
    <property type="term" value="F:GTP binding"/>
    <property type="evidence" value="ECO:0007669"/>
    <property type="project" value="UniProtKB-UniRule"/>
</dbReference>
<dbReference type="GO" id="GO:0046872">
    <property type="term" value="F:metal ion binding"/>
    <property type="evidence" value="ECO:0007669"/>
    <property type="project" value="UniProtKB-KW"/>
</dbReference>
<dbReference type="GO" id="GO:0000917">
    <property type="term" value="P:division septum assembly"/>
    <property type="evidence" value="ECO:0007669"/>
    <property type="project" value="UniProtKB-KW"/>
</dbReference>
<dbReference type="CDD" id="cd01876">
    <property type="entry name" value="YihA_EngB"/>
    <property type="match status" value="1"/>
</dbReference>
<dbReference type="Gene3D" id="3.40.50.300">
    <property type="entry name" value="P-loop containing nucleotide triphosphate hydrolases"/>
    <property type="match status" value="1"/>
</dbReference>
<dbReference type="HAMAP" id="MF_00321">
    <property type="entry name" value="GTPase_EngB"/>
    <property type="match status" value="1"/>
</dbReference>
<dbReference type="InterPro" id="IPR030393">
    <property type="entry name" value="G_ENGB_dom"/>
</dbReference>
<dbReference type="InterPro" id="IPR006073">
    <property type="entry name" value="GTP-bd"/>
</dbReference>
<dbReference type="InterPro" id="IPR019987">
    <property type="entry name" value="GTP-bd_ribosome_bio_YsxC"/>
</dbReference>
<dbReference type="InterPro" id="IPR027417">
    <property type="entry name" value="P-loop_NTPase"/>
</dbReference>
<dbReference type="NCBIfam" id="TIGR03598">
    <property type="entry name" value="GTPase_YsxC"/>
    <property type="match status" value="1"/>
</dbReference>
<dbReference type="PANTHER" id="PTHR11649:SF13">
    <property type="entry name" value="ENGB-TYPE G DOMAIN-CONTAINING PROTEIN"/>
    <property type="match status" value="1"/>
</dbReference>
<dbReference type="PANTHER" id="PTHR11649">
    <property type="entry name" value="MSS1/TRME-RELATED GTP-BINDING PROTEIN"/>
    <property type="match status" value="1"/>
</dbReference>
<dbReference type="Pfam" id="PF01926">
    <property type="entry name" value="MMR_HSR1"/>
    <property type="match status" value="1"/>
</dbReference>
<dbReference type="SUPFAM" id="SSF52540">
    <property type="entry name" value="P-loop containing nucleoside triphosphate hydrolases"/>
    <property type="match status" value="1"/>
</dbReference>
<dbReference type="PROSITE" id="PS51706">
    <property type="entry name" value="G_ENGB"/>
    <property type="match status" value="1"/>
</dbReference>
<organism>
    <name type="scientific">Nitratidesulfovibrio vulgaris (strain DP4)</name>
    <name type="common">Desulfovibrio vulgaris</name>
    <dbReference type="NCBI Taxonomy" id="391774"/>
    <lineage>
        <taxon>Bacteria</taxon>
        <taxon>Pseudomonadati</taxon>
        <taxon>Thermodesulfobacteriota</taxon>
        <taxon>Desulfovibrionia</taxon>
        <taxon>Desulfovibrionales</taxon>
        <taxon>Desulfovibrionaceae</taxon>
        <taxon>Nitratidesulfovibrio</taxon>
    </lineage>
</organism>
<keyword id="KW-0131">Cell cycle</keyword>
<keyword id="KW-0132">Cell division</keyword>
<keyword id="KW-0342">GTP-binding</keyword>
<keyword id="KW-0460">Magnesium</keyword>
<keyword id="KW-0479">Metal-binding</keyword>
<keyword id="KW-0547">Nucleotide-binding</keyword>
<keyword id="KW-0717">Septation</keyword>
<proteinExistence type="inferred from homology"/>
<gene>
    <name evidence="1" type="primary">engB</name>
    <name type="ordered locus">Dvul_1423</name>
</gene>
<reference key="1">
    <citation type="journal article" date="2009" name="Environ. Microbiol.">
        <title>Contribution of mobile genetic elements to Desulfovibrio vulgaris genome plasticity.</title>
        <authorList>
            <person name="Walker C.B."/>
            <person name="Stolyar S."/>
            <person name="Chivian D."/>
            <person name="Pinel N."/>
            <person name="Gabster J.A."/>
            <person name="Dehal P.S."/>
            <person name="He Z."/>
            <person name="Yang Z.K."/>
            <person name="Yen H.C."/>
            <person name="Zhou J."/>
            <person name="Wall J.D."/>
            <person name="Hazen T.C."/>
            <person name="Arkin A.P."/>
            <person name="Stahl D.A."/>
        </authorList>
    </citation>
    <scope>NUCLEOTIDE SEQUENCE [LARGE SCALE GENOMIC DNA]</scope>
    <source>
        <strain>DP4</strain>
    </source>
</reference>
<accession>A1VDC5</accession>
<evidence type="ECO:0000255" key="1">
    <source>
        <dbReference type="HAMAP-Rule" id="MF_00321"/>
    </source>
</evidence>
<evidence type="ECO:0000256" key="2">
    <source>
        <dbReference type="SAM" id="MobiDB-lite"/>
    </source>
</evidence>
<protein>
    <recommendedName>
        <fullName evidence="1">Probable GTP-binding protein EngB</fullName>
    </recommendedName>
</protein>
<feature type="chain" id="PRO_1000005810" description="Probable GTP-binding protein EngB">
    <location>
        <begin position="1"/>
        <end position="216"/>
    </location>
</feature>
<feature type="domain" description="EngB-type G" evidence="1">
    <location>
        <begin position="21"/>
        <end position="192"/>
    </location>
</feature>
<feature type="region of interest" description="Disordered" evidence="2">
    <location>
        <begin position="195"/>
        <end position="216"/>
    </location>
</feature>
<feature type="compositionally biased region" description="Acidic residues" evidence="2">
    <location>
        <begin position="196"/>
        <end position="216"/>
    </location>
</feature>
<feature type="binding site" evidence="1">
    <location>
        <begin position="29"/>
        <end position="36"/>
    </location>
    <ligand>
        <name>GTP</name>
        <dbReference type="ChEBI" id="CHEBI:37565"/>
    </ligand>
</feature>
<feature type="binding site" evidence="1">
    <location>
        <position position="36"/>
    </location>
    <ligand>
        <name>Mg(2+)</name>
        <dbReference type="ChEBI" id="CHEBI:18420"/>
    </ligand>
</feature>
<feature type="binding site" evidence="1">
    <location>
        <begin position="56"/>
        <end position="60"/>
    </location>
    <ligand>
        <name>GTP</name>
        <dbReference type="ChEBI" id="CHEBI:37565"/>
    </ligand>
</feature>
<feature type="binding site" evidence="1">
    <location>
        <position position="58"/>
    </location>
    <ligand>
        <name>Mg(2+)</name>
        <dbReference type="ChEBI" id="CHEBI:18420"/>
    </ligand>
</feature>
<feature type="binding site" evidence="1">
    <location>
        <begin position="75"/>
        <end position="78"/>
    </location>
    <ligand>
        <name>GTP</name>
        <dbReference type="ChEBI" id="CHEBI:37565"/>
    </ligand>
</feature>
<feature type="binding site" evidence="1">
    <location>
        <begin position="142"/>
        <end position="145"/>
    </location>
    <ligand>
        <name>GTP</name>
        <dbReference type="ChEBI" id="CHEBI:37565"/>
    </ligand>
</feature>
<feature type="binding site" evidence="1">
    <location>
        <begin position="170"/>
        <end position="173"/>
    </location>
    <ligand>
        <name>GTP</name>
        <dbReference type="ChEBI" id="CHEBI:37565"/>
    </ligand>
</feature>
<sequence length="216" mass="23709">MSSTLVLETTAYTLEQLIHLDAPQIALAGRSNVGKSSLVNALARRKQLAKTSSTPGKTRSVNYYRVEPEGFYIVDLPGYGYAQCSKEERKKWAKLIEKYIVSCKSLRGLAVLLDCRLDPQRLDVDLTSYARANNIPLLPVLTKGDKCKLRERSDRQKQWAVLLGGRKPLVTASMTGLGIADLWRELRALAAGGLSADDEAEDAPSDTIDAIDDVTA</sequence>
<comment type="function">
    <text evidence="1">Necessary for normal cell division and for the maintenance of normal septation.</text>
</comment>
<comment type="cofactor">
    <cofactor evidence="1">
        <name>Mg(2+)</name>
        <dbReference type="ChEBI" id="CHEBI:18420"/>
    </cofactor>
</comment>
<comment type="similarity">
    <text evidence="1">Belongs to the TRAFAC class TrmE-Era-EngA-EngB-Septin-like GTPase superfamily. EngB GTPase family.</text>
</comment>
<name>ENGB_NITV4</name>